<dbReference type="EC" id="2.5.1.145" evidence="1"/>
<dbReference type="EMBL" id="AE016822">
    <property type="protein sequence ID" value="AAT88980.1"/>
    <property type="molecule type" value="Genomic_DNA"/>
</dbReference>
<dbReference type="RefSeq" id="WP_011185976.1">
    <property type="nucleotide sequence ID" value="NC_006087.1"/>
</dbReference>
<dbReference type="SMR" id="Q6AF65"/>
<dbReference type="STRING" id="281090.Lxx11310"/>
<dbReference type="KEGG" id="lxx:Lxx11310"/>
<dbReference type="eggNOG" id="COG0682">
    <property type="taxonomic scope" value="Bacteria"/>
</dbReference>
<dbReference type="HOGENOM" id="CLU_013386_2_0_11"/>
<dbReference type="UniPathway" id="UPA00664"/>
<dbReference type="Proteomes" id="UP000001306">
    <property type="component" value="Chromosome"/>
</dbReference>
<dbReference type="GO" id="GO:0005886">
    <property type="term" value="C:plasma membrane"/>
    <property type="evidence" value="ECO:0007669"/>
    <property type="project" value="UniProtKB-SubCell"/>
</dbReference>
<dbReference type="GO" id="GO:0008961">
    <property type="term" value="F:phosphatidylglycerol-prolipoprotein diacylglyceryl transferase activity"/>
    <property type="evidence" value="ECO:0007669"/>
    <property type="project" value="UniProtKB-UniRule"/>
</dbReference>
<dbReference type="GO" id="GO:0042158">
    <property type="term" value="P:lipoprotein biosynthetic process"/>
    <property type="evidence" value="ECO:0007669"/>
    <property type="project" value="UniProtKB-UniRule"/>
</dbReference>
<dbReference type="HAMAP" id="MF_01147">
    <property type="entry name" value="Lgt"/>
    <property type="match status" value="1"/>
</dbReference>
<dbReference type="InterPro" id="IPR001640">
    <property type="entry name" value="Lgt"/>
</dbReference>
<dbReference type="NCBIfam" id="TIGR00544">
    <property type="entry name" value="lgt"/>
    <property type="match status" value="1"/>
</dbReference>
<dbReference type="PANTHER" id="PTHR30589:SF0">
    <property type="entry name" value="PHOSPHATIDYLGLYCEROL--PROLIPOPROTEIN DIACYLGLYCERYL TRANSFERASE"/>
    <property type="match status" value="1"/>
</dbReference>
<dbReference type="PANTHER" id="PTHR30589">
    <property type="entry name" value="PROLIPOPROTEIN DIACYLGLYCERYL TRANSFERASE"/>
    <property type="match status" value="1"/>
</dbReference>
<dbReference type="Pfam" id="PF01790">
    <property type="entry name" value="LGT"/>
    <property type="match status" value="1"/>
</dbReference>
<dbReference type="PROSITE" id="PS01311">
    <property type="entry name" value="LGT"/>
    <property type="match status" value="1"/>
</dbReference>
<proteinExistence type="inferred from homology"/>
<organism>
    <name type="scientific">Leifsonia xyli subsp. xyli (strain CTCB07)</name>
    <dbReference type="NCBI Taxonomy" id="281090"/>
    <lineage>
        <taxon>Bacteria</taxon>
        <taxon>Bacillati</taxon>
        <taxon>Actinomycetota</taxon>
        <taxon>Actinomycetes</taxon>
        <taxon>Micrococcales</taxon>
        <taxon>Microbacteriaceae</taxon>
        <taxon>Leifsonia</taxon>
    </lineage>
</organism>
<name>LGT_LEIXX</name>
<reference key="1">
    <citation type="journal article" date="2004" name="Mol. Plant Microbe Interact.">
        <title>The genome sequence of the Gram-positive sugarcane pathogen Leifsonia xyli subsp. xyli.</title>
        <authorList>
            <person name="Monteiro-Vitorello C.B."/>
            <person name="Camargo L.E.A."/>
            <person name="Van Sluys M.A."/>
            <person name="Kitajima J.P."/>
            <person name="Truffi D."/>
            <person name="do Amaral A.M."/>
            <person name="Harakava R."/>
            <person name="de Oliveira J.C.F."/>
            <person name="Wood D."/>
            <person name="de Oliveira M.C."/>
            <person name="Miyaki C.Y."/>
            <person name="Takita M.A."/>
            <person name="da Silva A.C.R."/>
            <person name="Furlan L.R."/>
            <person name="Carraro D.M."/>
            <person name="Camarotte G."/>
            <person name="Almeida N.F. Jr."/>
            <person name="Carrer H."/>
            <person name="Coutinho L.L."/>
            <person name="El-Dorry H.A."/>
            <person name="Ferro M.I.T."/>
            <person name="Gagliardi P.R."/>
            <person name="Giglioti E."/>
            <person name="Goldman M.H.S."/>
            <person name="Goldman G.H."/>
            <person name="Kimura E.T."/>
            <person name="Ferro E.S."/>
            <person name="Kuramae E.E."/>
            <person name="Lemos E.G.M."/>
            <person name="Lemos M.V.F."/>
            <person name="Mauro S.M.Z."/>
            <person name="Machado M.A."/>
            <person name="Marino C.L."/>
            <person name="Menck C.F."/>
            <person name="Nunes L.R."/>
            <person name="Oliveira R.C."/>
            <person name="Pereira G.G."/>
            <person name="Siqueira W."/>
            <person name="de Souza A.A."/>
            <person name="Tsai S.M."/>
            <person name="Zanca A.S."/>
            <person name="Simpson A.J.G."/>
            <person name="Brumbley S.M."/>
            <person name="Setubal J.C."/>
        </authorList>
    </citation>
    <scope>NUCLEOTIDE SEQUENCE [LARGE SCALE GENOMIC DNA]</scope>
    <source>
        <strain>CTCB07</strain>
    </source>
</reference>
<accession>Q6AF65</accession>
<comment type="function">
    <text evidence="1">Catalyzes the transfer of the diacylglyceryl group from phosphatidylglycerol to the sulfhydryl group of the N-terminal cysteine of a prolipoprotein, the first step in the formation of mature lipoproteins.</text>
</comment>
<comment type="catalytic activity">
    <reaction evidence="1">
        <text>L-cysteinyl-[prolipoprotein] + a 1,2-diacyl-sn-glycero-3-phospho-(1'-sn-glycerol) = an S-1,2-diacyl-sn-glyceryl-L-cysteinyl-[prolipoprotein] + sn-glycerol 1-phosphate + H(+)</text>
        <dbReference type="Rhea" id="RHEA:56712"/>
        <dbReference type="Rhea" id="RHEA-COMP:14679"/>
        <dbReference type="Rhea" id="RHEA-COMP:14680"/>
        <dbReference type="ChEBI" id="CHEBI:15378"/>
        <dbReference type="ChEBI" id="CHEBI:29950"/>
        <dbReference type="ChEBI" id="CHEBI:57685"/>
        <dbReference type="ChEBI" id="CHEBI:64716"/>
        <dbReference type="ChEBI" id="CHEBI:140658"/>
        <dbReference type="EC" id="2.5.1.145"/>
    </reaction>
</comment>
<comment type="pathway">
    <text evidence="1">Protein modification; lipoprotein biosynthesis (diacylglyceryl transfer).</text>
</comment>
<comment type="subcellular location">
    <subcellularLocation>
        <location evidence="1">Cell membrane</location>
        <topology evidence="1">Multi-pass membrane protein</topology>
    </subcellularLocation>
</comment>
<comment type="similarity">
    <text evidence="1">Belongs to the Lgt family.</text>
</comment>
<gene>
    <name evidence="1" type="primary">lgt</name>
    <name type="ordered locus">Lxx11310</name>
</gene>
<feature type="chain" id="PRO_0000172623" description="Phosphatidylglycerol--prolipoprotein diacylglyceryl transferase">
    <location>
        <begin position="1"/>
        <end position="334"/>
    </location>
</feature>
<feature type="transmembrane region" description="Helical" evidence="1">
    <location>
        <begin position="22"/>
        <end position="42"/>
    </location>
</feature>
<feature type="transmembrane region" description="Helical" evidence="1">
    <location>
        <begin position="54"/>
        <end position="74"/>
    </location>
</feature>
<feature type="transmembrane region" description="Helical" evidence="1">
    <location>
        <begin position="105"/>
        <end position="125"/>
    </location>
</feature>
<feature type="transmembrane region" description="Helical" evidence="1">
    <location>
        <begin position="131"/>
        <end position="151"/>
    </location>
</feature>
<feature type="transmembrane region" description="Helical" evidence="1">
    <location>
        <begin position="191"/>
        <end position="211"/>
    </location>
</feature>
<feature type="transmembrane region" description="Helical" evidence="1">
    <location>
        <begin position="251"/>
        <end position="271"/>
    </location>
</feature>
<feature type="region of interest" description="Disordered" evidence="2">
    <location>
        <begin position="296"/>
        <end position="334"/>
    </location>
</feature>
<feature type="compositionally biased region" description="Acidic residues" evidence="2">
    <location>
        <begin position="301"/>
        <end position="318"/>
    </location>
</feature>
<feature type="compositionally biased region" description="Polar residues" evidence="2">
    <location>
        <begin position="323"/>
        <end position="334"/>
    </location>
</feature>
<feature type="binding site" evidence="1">
    <location>
        <position position="153"/>
    </location>
    <ligand>
        <name>a 1,2-diacyl-sn-glycero-3-phospho-(1'-sn-glycerol)</name>
        <dbReference type="ChEBI" id="CHEBI:64716"/>
    </ligand>
</feature>
<sequence length="334" mass="36746">MSSWMASIPSPGPEWAQIHLPFLPFRIQTYALIILTGIVVAAMWTSRRLTKRGAEPGVVLDVLLWAVPLGIIGARLYHVVTHPADFFYPGANVWNPFQPGAIWNIWEGGNAIFGALIGGAVGVGIGCRWTGLRFWTFADALAPALLLAQAIGRLGNYVNQELFGLPTSLPWGLEIASGNKAIPVGLPEGTLFQPLFLYEIVWNVIGVFVILWLERRFRLQWGRVLAVYLIWYGLGRSYLESIRIDPSEFSFLGIPSNVWAAFAAVVLGAIILRVQAQRHTGLEPGPYLPGREWVSPQAEVESGETDPEEILHADDDEERTGTHKPQATSLSGSN</sequence>
<protein>
    <recommendedName>
        <fullName evidence="1">Phosphatidylglycerol--prolipoprotein diacylglyceryl transferase</fullName>
        <ecNumber evidence="1">2.5.1.145</ecNumber>
    </recommendedName>
</protein>
<keyword id="KW-1003">Cell membrane</keyword>
<keyword id="KW-0472">Membrane</keyword>
<keyword id="KW-1185">Reference proteome</keyword>
<keyword id="KW-0808">Transferase</keyword>
<keyword id="KW-0812">Transmembrane</keyword>
<keyword id="KW-1133">Transmembrane helix</keyword>
<evidence type="ECO:0000255" key="1">
    <source>
        <dbReference type="HAMAP-Rule" id="MF_01147"/>
    </source>
</evidence>
<evidence type="ECO:0000256" key="2">
    <source>
        <dbReference type="SAM" id="MobiDB-lite"/>
    </source>
</evidence>